<organism>
    <name type="scientific">Enterococcus faecalis (strain ATCC 700802 / V583)</name>
    <dbReference type="NCBI Taxonomy" id="226185"/>
    <lineage>
        <taxon>Bacteria</taxon>
        <taxon>Bacillati</taxon>
        <taxon>Bacillota</taxon>
        <taxon>Bacilli</taxon>
        <taxon>Lactobacillales</taxon>
        <taxon>Enterococcaceae</taxon>
        <taxon>Enterococcus</taxon>
    </lineage>
</organism>
<feature type="chain" id="PRO_0000162432" description="Regulatory protein RecX">
    <location>
        <begin position="1"/>
        <end position="266"/>
    </location>
</feature>
<protein>
    <recommendedName>
        <fullName evidence="1">Regulatory protein RecX</fullName>
    </recommendedName>
</protein>
<proteinExistence type="inferred from homology"/>
<evidence type="ECO:0000255" key="1">
    <source>
        <dbReference type="HAMAP-Rule" id="MF_01114"/>
    </source>
</evidence>
<comment type="function">
    <text evidence="1">Modulates RecA activity.</text>
</comment>
<comment type="subcellular location">
    <subcellularLocation>
        <location evidence="1">Cytoplasm</location>
    </subcellularLocation>
</comment>
<comment type="similarity">
    <text evidence="1">Belongs to the RecX family.</text>
</comment>
<dbReference type="EMBL" id="AE016830">
    <property type="protein sequence ID" value="AAO82409.1"/>
    <property type="molecule type" value="Genomic_DNA"/>
</dbReference>
<dbReference type="RefSeq" id="NP_816339.1">
    <property type="nucleotide sequence ID" value="NC_004668.1"/>
</dbReference>
<dbReference type="RefSeq" id="WP_002387182.1">
    <property type="nucleotide sequence ID" value="NZ_KE136528.1"/>
</dbReference>
<dbReference type="SMR" id="Q830R7"/>
<dbReference type="STRING" id="226185.EF_2705"/>
<dbReference type="DNASU" id="1201561"/>
<dbReference type="EnsemblBacteria" id="AAO82409">
    <property type="protein sequence ID" value="AAO82409"/>
    <property type="gene ID" value="EF_2705"/>
</dbReference>
<dbReference type="KEGG" id="efa:EF2705"/>
<dbReference type="PATRIC" id="fig|226185.45.peg.858"/>
<dbReference type="eggNOG" id="COG2137">
    <property type="taxonomic scope" value="Bacteria"/>
</dbReference>
<dbReference type="HOGENOM" id="CLU_066607_4_0_9"/>
<dbReference type="Proteomes" id="UP000001415">
    <property type="component" value="Chromosome"/>
</dbReference>
<dbReference type="GO" id="GO:0005737">
    <property type="term" value="C:cytoplasm"/>
    <property type="evidence" value="ECO:0007669"/>
    <property type="project" value="UniProtKB-SubCell"/>
</dbReference>
<dbReference type="GO" id="GO:0006282">
    <property type="term" value="P:regulation of DNA repair"/>
    <property type="evidence" value="ECO:0007669"/>
    <property type="project" value="UniProtKB-UniRule"/>
</dbReference>
<dbReference type="Gene3D" id="1.10.10.10">
    <property type="entry name" value="Winged helix-like DNA-binding domain superfamily/Winged helix DNA-binding domain"/>
    <property type="match status" value="4"/>
</dbReference>
<dbReference type="HAMAP" id="MF_01114">
    <property type="entry name" value="RecX"/>
    <property type="match status" value="1"/>
</dbReference>
<dbReference type="InterPro" id="IPR053926">
    <property type="entry name" value="RecX_HTH_1st"/>
</dbReference>
<dbReference type="InterPro" id="IPR053924">
    <property type="entry name" value="RecX_HTH_2nd"/>
</dbReference>
<dbReference type="InterPro" id="IPR053925">
    <property type="entry name" value="RecX_HTH_3rd"/>
</dbReference>
<dbReference type="InterPro" id="IPR003783">
    <property type="entry name" value="Regulatory_RecX"/>
</dbReference>
<dbReference type="InterPro" id="IPR036388">
    <property type="entry name" value="WH-like_DNA-bd_sf"/>
</dbReference>
<dbReference type="NCBIfam" id="NF010733">
    <property type="entry name" value="PRK14135.1"/>
    <property type="match status" value="1"/>
</dbReference>
<dbReference type="PANTHER" id="PTHR33602">
    <property type="entry name" value="REGULATORY PROTEIN RECX FAMILY PROTEIN"/>
    <property type="match status" value="1"/>
</dbReference>
<dbReference type="PANTHER" id="PTHR33602:SF1">
    <property type="entry name" value="REGULATORY PROTEIN RECX FAMILY PROTEIN"/>
    <property type="match status" value="1"/>
</dbReference>
<dbReference type="Pfam" id="PF21982">
    <property type="entry name" value="RecX_HTH1"/>
    <property type="match status" value="1"/>
</dbReference>
<dbReference type="Pfam" id="PF02631">
    <property type="entry name" value="RecX_HTH2"/>
    <property type="match status" value="1"/>
</dbReference>
<dbReference type="Pfam" id="PF21981">
    <property type="entry name" value="RecX_HTH3"/>
    <property type="match status" value="2"/>
</dbReference>
<accession>Q830R7</accession>
<gene>
    <name evidence="1" type="primary">recX</name>
    <name type="ordered locus">EF_2705</name>
</gene>
<keyword id="KW-0963">Cytoplasm</keyword>
<keyword id="KW-1185">Reference proteome</keyword>
<reference key="1">
    <citation type="journal article" date="2003" name="Science">
        <title>Role of mobile DNA in the evolution of vancomycin-resistant Enterococcus faecalis.</title>
        <authorList>
            <person name="Paulsen I.T."/>
            <person name="Banerjei L."/>
            <person name="Myers G.S.A."/>
            <person name="Nelson K.E."/>
            <person name="Seshadri R."/>
            <person name="Read T.D."/>
            <person name="Fouts D.E."/>
            <person name="Eisen J.A."/>
            <person name="Gill S.R."/>
            <person name="Heidelberg J.F."/>
            <person name="Tettelin H."/>
            <person name="Dodson R.J."/>
            <person name="Umayam L.A."/>
            <person name="Brinkac L.M."/>
            <person name="Beanan M.J."/>
            <person name="Daugherty S.C."/>
            <person name="DeBoy R.T."/>
            <person name="Durkin S.A."/>
            <person name="Kolonay J.F."/>
            <person name="Madupu R."/>
            <person name="Nelson W.C."/>
            <person name="Vamathevan J.J."/>
            <person name="Tran B."/>
            <person name="Upton J."/>
            <person name="Hansen T."/>
            <person name="Shetty J."/>
            <person name="Khouri H.M."/>
            <person name="Utterback T.R."/>
            <person name="Radune D."/>
            <person name="Ketchum K.A."/>
            <person name="Dougherty B.A."/>
            <person name="Fraser C.M."/>
        </authorList>
    </citation>
    <scope>NUCLEOTIDE SEQUENCE [LARGE SCALE GENOMIC DNA]</scope>
    <source>
        <strain>ATCC 700802 / V583</strain>
    </source>
</reference>
<name>RECX_ENTFA</name>
<sequence length="266" mass="31313">MTTITRISKDKGEFYLLWLSSGEKLRVSEDILVRQRLLKGQELSDTLIEEIKKASSYDVGLQMAMNYLSYQLRSKKEIFTYLKEKEIVPEDRVKIVQRLEELRLLDDAIFSESYVRTAMRTSDKGPRNVAQQLKQKGISEEDIQHGLTFYTLDEQLNVATATAEKAMKRYRTKSFKDALQKMRLHLMQKGFTNEIIDLALESLAFEKDEEQEQQALDKEGERLWRANQRFDFSKKVQKVKQSLFQKGFDYDLIQQFISEKEVEHDE</sequence>